<evidence type="ECO:0000255" key="1">
    <source>
        <dbReference type="HAMAP-Rule" id="MF_01346"/>
    </source>
</evidence>
<gene>
    <name evidence="1" type="primary">atpA</name>
    <name type="ordered locus">BCG_1368</name>
</gene>
<sequence>MAELTIPADDIQSAIEEYVSSFTADTSREEVGTVVDAGDGIAHVEGLPSVMTQELLEFPGGILGVALNLDEHSVGAVILGDFENIEEGQQVKRTGEVLSVPVGDGFLGRVVNPLGQPIDGRGDVDSDTRRALELQAPSVVHRQGVKEPLQTGIKAIDAMTPIGRGQRQLIIGDRKTGKTAVCVDTILNQRQNWESGDPKKQVRCVYVAIGQKGTTIAAVRRTLEEGGAMDYTTIVAAAASESAGFKWLAPYTGSAIAQHWMYEGKHVLIIFDDLTKQAEAYRAISLLLRRPPGREAYPGDVFYLHSRLLERCAKLSDDLGGGSLTGLPIIETKANDISAYIPTNVISITDGQCFLETDLFNQGVRPAINVGVSVSRVGGAAQIKAMKEVAGSLRLDLSQYRELEAFAAFASDLDAASKAQLERGARLVELLKQPQSQPMPVEEQVVSIFLGTGGHLDSVPVEDVRRFETELLDHMRASEEEILTEIRDSQKLTEEAADKLTEVIKNFKKGFAATGGGSVVPDEHVEALDEDKLAKEAVKVKKPAPKKKK</sequence>
<protein>
    <recommendedName>
        <fullName evidence="1">ATP synthase subunit alpha</fullName>
        <ecNumber evidence="1">7.1.2.2</ecNumber>
    </recommendedName>
    <alternativeName>
        <fullName evidence="1">ATP synthase F1 sector subunit alpha</fullName>
    </alternativeName>
    <alternativeName>
        <fullName evidence="1">F-ATPase subunit alpha</fullName>
    </alternativeName>
</protein>
<comment type="function">
    <text evidence="1">Produces ATP from ADP in the presence of a proton gradient across the membrane. The alpha chain is a regulatory subunit.</text>
</comment>
<comment type="catalytic activity">
    <reaction evidence="1">
        <text>ATP + H2O + 4 H(+)(in) = ADP + phosphate + 5 H(+)(out)</text>
        <dbReference type="Rhea" id="RHEA:57720"/>
        <dbReference type="ChEBI" id="CHEBI:15377"/>
        <dbReference type="ChEBI" id="CHEBI:15378"/>
        <dbReference type="ChEBI" id="CHEBI:30616"/>
        <dbReference type="ChEBI" id="CHEBI:43474"/>
        <dbReference type="ChEBI" id="CHEBI:456216"/>
        <dbReference type="EC" id="7.1.2.2"/>
    </reaction>
</comment>
<comment type="subunit">
    <text evidence="1">F-type ATPases have 2 components, CF(1) - the catalytic core - and CF(0) - the membrane proton channel. CF(1) has five subunits: alpha(3), beta(3), gamma(1), delta(1), epsilon(1). CF(0) has three main subunits: a(1), b(2) and c(9-12). The alpha and beta chains form an alternating ring which encloses part of the gamma chain. CF(1) is attached to CF(0) by a central stalk formed by the gamma and epsilon chains, while a peripheral stalk is formed by the delta and b chains.</text>
</comment>
<comment type="subcellular location">
    <subcellularLocation>
        <location evidence="1">Cell membrane</location>
        <topology evidence="1">Peripheral membrane protein</topology>
    </subcellularLocation>
</comment>
<comment type="similarity">
    <text evidence="1">Belongs to the ATPase alpha/beta chains family.</text>
</comment>
<feature type="chain" id="PRO_0000302668" description="ATP synthase subunit alpha">
    <location>
        <begin position="1"/>
        <end position="549"/>
    </location>
</feature>
<feature type="binding site" evidence="1">
    <location>
        <begin position="172"/>
        <end position="179"/>
    </location>
    <ligand>
        <name>ATP</name>
        <dbReference type="ChEBI" id="CHEBI:30616"/>
    </ligand>
</feature>
<feature type="site" description="Required for activity" evidence="1">
    <location>
        <position position="373"/>
    </location>
</feature>
<proteinExistence type="inferred from homology"/>
<organism>
    <name type="scientific">Mycobacterium bovis (strain BCG / Pasteur 1173P2)</name>
    <dbReference type="NCBI Taxonomy" id="410289"/>
    <lineage>
        <taxon>Bacteria</taxon>
        <taxon>Bacillati</taxon>
        <taxon>Actinomycetota</taxon>
        <taxon>Actinomycetes</taxon>
        <taxon>Mycobacteriales</taxon>
        <taxon>Mycobacteriaceae</taxon>
        <taxon>Mycobacterium</taxon>
        <taxon>Mycobacterium tuberculosis complex</taxon>
    </lineage>
</organism>
<name>ATPA_MYCBP</name>
<keyword id="KW-0066">ATP synthesis</keyword>
<keyword id="KW-0067">ATP-binding</keyword>
<keyword id="KW-1003">Cell membrane</keyword>
<keyword id="KW-0139">CF(1)</keyword>
<keyword id="KW-0375">Hydrogen ion transport</keyword>
<keyword id="KW-0406">Ion transport</keyword>
<keyword id="KW-0472">Membrane</keyword>
<keyword id="KW-0547">Nucleotide-binding</keyword>
<keyword id="KW-1278">Translocase</keyword>
<keyword id="KW-0813">Transport</keyword>
<reference key="1">
    <citation type="journal article" date="2007" name="Proc. Natl. Acad. Sci. U.S.A.">
        <title>Genome plasticity of BCG and impact on vaccine efficacy.</title>
        <authorList>
            <person name="Brosch R."/>
            <person name="Gordon S.V."/>
            <person name="Garnier T."/>
            <person name="Eiglmeier K."/>
            <person name="Frigui W."/>
            <person name="Valenti P."/>
            <person name="Dos Santos S."/>
            <person name="Duthoy S."/>
            <person name="Lacroix C."/>
            <person name="Garcia-Pelayo C."/>
            <person name="Inwald J.K."/>
            <person name="Golby P."/>
            <person name="Garcia J.N."/>
            <person name="Hewinson R.G."/>
            <person name="Behr M.A."/>
            <person name="Quail M.A."/>
            <person name="Churcher C."/>
            <person name="Barrell B.G."/>
            <person name="Parkhill J."/>
            <person name="Cole S.T."/>
        </authorList>
    </citation>
    <scope>NUCLEOTIDE SEQUENCE [LARGE SCALE GENOMIC DNA]</scope>
    <source>
        <strain>BCG / Pasteur 1173P2</strain>
    </source>
</reference>
<accession>A1KI96</accession>
<dbReference type="EC" id="7.1.2.2" evidence="1"/>
<dbReference type="EMBL" id="AM408590">
    <property type="protein sequence ID" value="CAL71355.1"/>
    <property type="molecule type" value="Genomic_DNA"/>
</dbReference>
<dbReference type="RefSeq" id="WP_003406699.1">
    <property type="nucleotide sequence ID" value="NC_008769.1"/>
</dbReference>
<dbReference type="SMR" id="A1KI96"/>
<dbReference type="KEGG" id="mbb:BCG_1368"/>
<dbReference type="HOGENOM" id="CLU_010091_2_1_11"/>
<dbReference type="Proteomes" id="UP000001472">
    <property type="component" value="Chromosome"/>
</dbReference>
<dbReference type="GO" id="GO:0005886">
    <property type="term" value="C:plasma membrane"/>
    <property type="evidence" value="ECO:0007669"/>
    <property type="project" value="UniProtKB-SubCell"/>
</dbReference>
<dbReference type="GO" id="GO:0045259">
    <property type="term" value="C:proton-transporting ATP synthase complex"/>
    <property type="evidence" value="ECO:0007669"/>
    <property type="project" value="UniProtKB-KW"/>
</dbReference>
<dbReference type="GO" id="GO:0043531">
    <property type="term" value="F:ADP binding"/>
    <property type="evidence" value="ECO:0007669"/>
    <property type="project" value="TreeGrafter"/>
</dbReference>
<dbReference type="GO" id="GO:0005524">
    <property type="term" value="F:ATP binding"/>
    <property type="evidence" value="ECO:0007669"/>
    <property type="project" value="UniProtKB-UniRule"/>
</dbReference>
<dbReference type="GO" id="GO:0046933">
    <property type="term" value="F:proton-transporting ATP synthase activity, rotational mechanism"/>
    <property type="evidence" value="ECO:0007669"/>
    <property type="project" value="UniProtKB-UniRule"/>
</dbReference>
<dbReference type="CDD" id="cd18113">
    <property type="entry name" value="ATP-synt_F1_alpha_C"/>
    <property type="match status" value="1"/>
</dbReference>
<dbReference type="CDD" id="cd18116">
    <property type="entry name" value="ATP-synt_F1_alpha_N"/>
    <property type="match status" value="1"/>
</dbReference>
<dbReference type="CDD" id="cd01132">
    <property type="entry name" value="F1-ATPase_alpha_CD"/>
    <property type="match status" value="1"/>
</dbReference>
<dbReference type="FunFam" id="1.20.150.20:FF:000001">
    <property type="entry name" value="ATP synthase subunit alpha"/>
    <property type="match status" value="1"/>
</dbReference>
<dbReference type="FunFam" id="2.40.30.20:FF:000001">
    <property type="entry name" value="ATP synthase subunit alpha"/>
    <property type="match status" value="1"/>
</dbReference>
<dbReference type="FunFam" id="3.40.50.300:FF:000002">
    <property type="entry name" value="ATP synthase subunit alpha"/>
    <property type="match status" value="1"/>
</dbReference>
<dbReference type="Gene3D" id="2.40.30.20">
    <property type="match status" value="1"/>
</dbReference>
<dbReference type="Gene3D" id="1.20.150.20">
    <property type="entry name" value="ATP synthase alpha/beta chain, C-terminal domain"/>
    <property type="match status" value="1"/>
</dbReference>
<dbReference type="Gene3D" id="3.40.50.300">
    <property type="entry name" value="P-loop containing nucleotide triphosphate hydrolases"/>
    <property type="match status" value="1"/>
</dbReference>
<dbReference type="HAMAP" id="MF_01346">
    <property type="entry name" value="ATP_synth_alpha_bact"/>
    <property type="match status" value="1"/>
</dbReference>
<dbReference type="InterPro" id="IPR023366">
    <property type="entry name" value="ATP_synth_asu-like_sf"/>
</dbReference>
<dbReference type="InterPro" id="IPR000793">
    <property type="entry name" value="ATP_synth_asu_C"/>
</dbReference>
<dbReference type="InterPro" id="IPR038376">
    <property type="entry name" value="ATP_synth_asu_C_sf"/>
</dbReference>
<dbReference type="InterPro" id="IPR033732">
    <property type="entry name" value="ATP_synth_F1_a_nt-bd_dom"/>
</dbReference>
<dbReference type="InterPro" id="IPR005294">
    <property type="entry name" value="ATP_synth_F1_asu"/>
</dbReference>
<dbReference type="InterPro" id="IPR020003">
    <property type="entry name" value="ATPase_a/bsu_AS"/>
</dbReference>
<dbReference type="InterPro" id="IPR004100">
    <property type="entry name" value="ATPase_F1/V1/A1_a/bsu_N"/>
</dbReference>
<dbReference type="InterPro" id="IPR036121">
    <property type="entry name" value="ATPase_F1/V1/A1_a/bsu_N_sf"/>
</dbReference>
<dbReference type="InterPro" id="IPR000194">
    <property type="entry name" value="ATPase_F1/V1/A1_a/bsu_nucl-bd"/>
</dbReference>
<dbReference type="InterPro" id="IPR027417">
    <property type="entry name" value="P-loop_NTPase"/>
</dbReference>
<dbReference type="NCBIfam" id="TIGR00962">
    <property type="entry name" value="atpA"/>
    <property type="match status" value="1"/>
</dbReference>
<dbReference type="NCBIfam" id="NF009884">
    <property type="entry name" value="PRK13343.1"/>
    <property type="match status" value="1"/>
</dbReference>
<dbReference type="PANTHER" id="PTHR48082">
    <property type="entry name" value="ATP SYNTHASE SUBUNIT ALPHA, MITOCHONDRIAL"/>
    <property type="match status" value="1"/>
</dbReference>
<dbReference type="PANTHER" id="PTHR48082:SF2">
    <property type="entry name" value="ATP SYNTHASE SUBUNIT ALPHA, MITOCHONDRIAL"/>
    <property type="match status" value="1"/>
</dbReference>
<dbReference type="Pfam" id="PF00006">
    <property type="entry name" value="ATP-synt_ab"/>
    <property type="match status" value="1"/>
</dbReference>
<dbReference type="Pfam" id="PF00306">
    <property type="entry name" value="ATP-synt_ab_C"/>
    <property type="match status" value="1"/>
</dbReference>
<dbReference type="Pfam" id="PF02874">
    <property type="entry name" value="ATP-synt_ab_N"/>
    <property type="match status" value="1"/>
</dbReference>
<dbReference type="PIRSF" id="PIRSF039088">
    <property type="entry name" value="F_ATPase_subunit_alpha"/>
    <property type="match status" value="1"/>
</dbReference>
<dbReference type="SUPFAM" id="SSF47917">
    <property type="entry name" value="C-terminal domain of alpha and beta subunits of F1 ATP synthase"/>
    <property type="match status" value="1"/>
</dbReference>
<dbReference type="SUPFAM" id="SSF50615">
    <property type="entry name" value="N-terminal domain of alpha and beta subunits of F1 ATP synthase"/>
    <property type="match status" value="1"/>
</dbReference>
<dbReference type="SUPFAM" id="SSF52540">
    <property type="entry name" value="P-loop containing nucleoside triphosphate hydrolases"/>
    <property type="match status" value="1"/>
</dbReference>
<dbReference type="PROSITE" id="PS00152">
    <property type="entry name" value="ATPASE_ALPHA_BETA"/>
    <property type="match status" value="1"/>
</dbReference>